<keyword id="KW-0963">Cytoplasm</keyword>
<keyword id="KW-0324">Glycolysis</keyword>
<keyword id="KW-0456">Lyase</keyword>
<keyword id="KW-0460">Magnesium</keyword>
<keyword id="KW-0479">Metal-binding</keyword>
<keyword id="KW-1185">Reference proteome</keyword>
<keyword id="KW-0964">Secreted</keyword>
<accession>B9M3M1</accession>
<proteinExistence type="inferred from homology"/>
<organism>
    <name type="scientific">Geotalea daltonii (strain DSM 22248 / JCM 15807 / FRC-32)</name>
    <name type="common">Geobacter daltonii</name>
    <dbReference type="NCBI Taxonomy" id="316067"/>
    <lineage>
        <taxon>Bacteria</taxon>
        <taxon>Pseudomonadati</taxon>
        <taxon>Thermodesulfobacteriota</taxon>
        <taxon>Desulfuromonadia</taxon>
        <taxon>Geobacterales</taxon>
        <taxon>Geobacteraceae</taxon>
        <taxon>Geotalea</taxon>
    </lineage>
</organism>
<protein>
    <recommendedName>
        <fullName evidence="1">Enolase</fullName>
        <ecNumber evidence="1">4.2.1.11</ecNumber>
    </recommendedName>
    <alternativeName>
        <fullName evidence="1">2-phospho-D-glycerate hydro-lyase</fullName>
    </alternativeName>
    <alternativeName>
        <fullName evidence="1">2-phosphoglycerate dehydratase</fullName>
    </alternativeName>
</protein>
<feature type="chain" id="PRO_1000189951" description="Enolase">
    <location>
        <begin position="1"/>
        <end position="430"/>
    </location>
</feature>
<feature type="active site" description="Proton donor" evidence="1">
    <location>
        <position position="205"/>
    </location>
</feature>
<feature type="active site" description="Proton acceptor" evidence="1">
    <location>
        <position position="338"/>
    </location>
</feature>
<feature type="binding site" evidence="1">
    <location>
        <position position="163"/>
    </location>
    <ligand>
        <name>(2R)-2-phosphoglycerate</name>
        <dbReference type="ChEBI" id="CHEBI:58289"/>
    </ligand>
</feature>
<feature type="binding site" evidence="1">
    <location>
        <position position="242"/>
    </location>
    <ligand>
        <name>Mg(2+)</name>
        <dbReference type="ChEBI" id="CHEBI:18420"/>
    </ligand>
</feature>
<feature type="binding site" evidence="1">
    <location>
        <position position="286"/>
    </location>
    <ligand>
        <name>Mg(2+)</name>
        <dbReference type="ChEBI" id="CHEBI:18420"/>
    </ligand>
</feature>
<feature type="binding site" evidence="1">
    <location>
        <position position="313"/>
    </location>
    <ligand>
        <name>Mg(2+)</name>
        <dbReference type="ChEBI" id="CHEBI:18420"/>
    </ligand>
</feature>
<feature type="binding site" evidence="1">
    <location>
        <position position="338"/>
    </location>
    <ligand>
        <name>(2R)-2-phosphoglycerate</name>
        <dbReference type="ChEBI" id="CHEBI:58289"/>
    </ligand>
</feature>
<feature type="binding site" evidence="1">
    <location>
        <position position="367"/>
    </location>
    <ligand>
        <name>(2R)-2-phosphoglycerate</name>
        <dbReference type="ChEBI" id="CHEBI:58289"/>
    </ligand>
</feature>
<feature type="binding site" evidence="1">
    <location>
        <position position="368"/>
    </location>
    <ligand>
        <name>(2R)-2-phosphoglycerate</name>
        <dbReference type="ChEBI" id="CHEBI:58289"/>
    </ligand>
</feature>
<feature type="binding site" evidence="1">
    <location>
        <position position="389"/>
    </location>
    <ligand>
        <name>(2R)-2-phosphoglycerate</name>
        <dbReference type="ChEBI" id="CHEBI:58289"/>
    </ligand>
</feature>
<gene>
    <name evidence="1" type="primary">eno</name>
    <name type="ordered locus">Geob_3099</name>
</gene>
<evidence type="ECO:0000255" key="1">
    <source>
        <dbReference type="HAMAP-Rule" id="MF_00318"/>
    </source>
</evidence>
<dbReference type="EC" id="4.2.1.11" evidence="1"/>
<dbReference type="EMBL" id="CP001390">
    <property type="protein sequence ID" value="ACM21442.1"/>
    <property type="molecule type" value="Genomic_DNA"/>
</dbReference>
<dbReference type="RefSeq" id="WP_012648170.1">
    <property type="nucleotide sequence ID" value="NC_011979.1"/>
</dbReference>
<dbReference type="SMR" id="B9M3M1"/>
<dbReference type="STRING" id="316067.Geob_3099"/>
<dbReference type="KEGG" id="geo:Geob_3099"/>
<dbReference type="eggNOG" id="COG0148">
    <property type="taxonomic scope" value="Bacteria"/>
</dbReference>
<dbReference type="HOGENOM" id="CLU_031223_2_1_7"/>
<dbReference type="OrthoDB" id="9804716at2"/>
<dbReference type="UniPathway" id="UPA00109">
    <property type="reaction ID" value="UER00187"/>
</dbReference>
<dbReference type="Proteomes" id="UP000007721">
    <property type="component" value="Chromosome"/>
</dbReference>
<dbReference type="GO" id="GO:0009986">
    <property type="term" value="C:cell surface"/>
    <property type="evidence" value="ECO:0007669"/>
    <property type="project" value="UniProtKB-SubCell"/>
</dbReference>
<dbReference type="GO" id="GO:0005576">
    <property type="term" value="C:extracellular region"/>
    <property type="evidence" value="ECO:0007669"/>
    <property type="project" value="UniProtKB-SubCell"/>
</dbReference>
<dbReference type="GO" id="GO:0000015">
    <property type="term" value="C:phosphopyruvate hydratase complex"/>
    <property type="evidence" value="ECO:0007669"/>
    <property type="project" value="InterPro"/>
</dbReference>
<dbReference type="GO" id="GO:0000287">
    <property type="term" value="F:magnesium ion binding"/>
    <property type="evidence" value="ECO:0007669"/>
    <property type="project" value="UniProtKB-UniRule"/>
</dbReference>
<dbReference type="GO" id="GO:0004634">
    <property type="term" value="F:phosphopyruvate hydratase activity"/>
    <property type="evidence" value="ECO:0007669"/>
    <property type="project" value="UniProtKB-UniRule"/>
</dbReference>
<dbReference type="GO" id="GO:0006096">
    <property type="term" value="P:glycolytic process"/>
    <property type="evidence" value="ECO:0007669"/>
    <property type="project" value="UniProtKB-UniRule"/>
</dbReference>
<dbReference type="CDD" id="cd03313">
    <property type="entry name" value="enolase"/>
    <property type="match status" value="1"/>
</dbReference>
<dbReference type="FunFam" id="3.20.20.120:FF:000001">
    <property type="entry name" value="Enolase"/>
    <property type="match status" value="1"/>
</dbReference>
<dbReference type="FunFam" id="3.30.390.10:FF:000001">
    <property type="entry name" value="Enolase"/>
    <property type="match status" value="1"/>
</dbReference>
<dbReference type="Gene3D" id="3.20.20.120">
    <property type="entry name" value="Enolase-like C-terminal domain"/>
    <property type="match status" value="1"/>
</dbReference>
<dbReference type="Gene3D" id="3.30.390.10">
    <property type="entry name" value="Enolase-like, N-terminal domain"/>
    <property type="match status" value="1"/>
</dbReference>
<dbReference type="HAMAP" id="MF_00318">
    <property type="entry name" value="Enolase"/>
    <property type="match status" value="1"/>
</dbReference>
<dbReference type="InterPro" id="IPR000941">
    <property type="entry name" value="Enolase"/>
</dbReference>
<dbReference type="InterPro" id="IPR036849">
    <property type="entry name" value="Enolase-like_C_sf"/>
</dbReference>
<dbReference type="InterPro" id="IPR029017">
    <property type="entry name" value="Enolase-like_N"/>
</dbReference>
<dbReference type="InterPro" id="IPR020810">
    <property type="entry name" value="Enolase_C"/>
</dbReference>
<dbReference type="InterPro" id="IPR020809">
    <property type="entry name" value="Enolase_CS"/>
</dbReference>
<dbReference type="InterPro" id="IPR020811">
    <property type="entry name" value="Enolase_N"/>
</dbReference>
<dbReference type="NCBIfam" id="TIGR01060">
    <property type="entry name" value="eno"/>
    <property type="match status" value="1"/>
</dbReference>
<dbReference type="PANTHER" id="PTHR11902">
    <property type="entry name" value="ENOLASE"/>
    <property type="match status" value="1"/>
</dbReference>
<dbReference type="PANTHER" id="PTHR11902:SF1">
    <property type="entry name" value="ENOLASE"/>
    <property type="match status" value="1"/>
</dbReference>
<dbReference type="Pfam" id="PF00113">
    <property type="entry name" value="Enolase_C"/>
    <property type="match status" value="1"/>
</dbReference>
<dbReference type="Pfam" id="PF03952">
    <property type="entry name" value="Enolase_N"/>
    <property type="match status" value="1"/>
</dbReference>
<dbReference type="PIRSF" id="PIRSF001400">
    <property type="entry name" value="Enolase"/>
    <property type="match status" value="1"/>
</dbReference>
<dbReference type="PRINTS" id="PR00148">
    <property type="entry name" value="ENOLASE"/>
</dbReference>
<dbReference type="SFLD" id="SFLDS00001">
    <property type="entry name" value="Enolase"/>
    <property type="match status" value="1"/>
</dbReference>
<dbReference type="SFLD" id="SFLDF00002">
    <property type="entry name" value="enolase"/>
    <property type="match status" value="1"/>
</dbReference>
<dbReference type="SMART" id="SM01192">
    <property type="entry name" value="Enolase_C"/>
    <property type="match status" value="1"/>
</dbReference>
<dbReference type="SMART" id="SM01193">
    <property type="entry name" value="Enolase_N"/>
    <property type="match status" value="1"/>
</dbReference>
<dbReference type="SUPFAM" id="SSF51604">
    <property type="entry name" value="Enolase C-terminal domain-like"/>
    <property type="match status" value="1"/>
</dbReference>
<dbReference type="SUPFAM" id="SSF54826">
    <property type="entry name" value="Enolase N-terminal domain-like"/>
    <property type="match status" value="1"/>
</dbReference>
<dbReference type="PROSITE" id="PS00164">
    <property type="entry name" value="ENOLASE"/>
    <property type="match status" value="1"/>
</dbReference>
<reference key="1">
    <citation type="submission" date="2009-01" db="EMBL/GenBank/DDBJ databases">
        <title>Complete sequence of Geobacter sp. FRC-32.</title>
        <authorList>
            <consortium name="US DOE Joint Genome Institute"/>
            <person name="Lucas S."/>
            <person name="Copeland A."/>
            <person name="Lapidus A."/>
            <person name="Glavina del Rio T."/>
            <person name="Dalin E."/>
            <person name="Tice H."/>
            <person name="Bruce D."/>
            <person name="Goodwin L."/>
            <person name="Pitluck S."/>
            <person name="Saunders E."/>
            <person name="Brettin T."/>
            <person name="Detter J.C."/>
            <person name="Han C."/>
            <person name="Larimer F."/>
            <person name="Land M."/>
            <person name="Hauser L."/>
            <person name="Kyrpides N."/>
            <person name="Ovchinnikova G."/>
            <person name="Kostka J."/>
            <person name="Richardson P."/>
        </authorList>
    </citation>
    <scope>NUCLEOTIDE SEQUENCE [LARGE SCALE GENOMIC DNA]</scope>
    <source>
        <strain>DSM 22248 / JCM 15807 / FRC-32</strain>
    </source>
</reference>
<comment type="function">
    <text evidence="1">Catalyzes the reversible conversion of 2-phosphoglycerate (2-PG) into phosphoenolpyruvate (PEP). It is essential for the degradation of carbohydrates via glycolysis.</text>
</comment>
<comment type="catalytic activity">
    <reaction evidence="1">
        <text>(2R)-2-phosphoglycerate = phosphoenolpyruvate + H2O</text>
        <dbReference type="Rhea" id="RHEA:10164"/>
        <dbReference type="ChEBI" id="CHEBI:15377"/>
        <dbReference type="ChEBI" id="CHEBI:58289"/>
        <dbReference type="ChEBI" id="CHEBI:58702"/>
        <dbReference type="EC" id="4.2.1.11"/>
    </reaction>
</comment>
<comment type="cofactor">
    <cofactor evidence="1">
        <name>Mg(2+)</name>
        <dbReference type="ChEBI" id="CHEBI:18420"/>
    </cofactor>
    <text evidence="1">Binds a second Mg(2+) ion via substrate during catalysis.</text>
</comment>
<comment type="pathway">
    <text evidence="1">Carbohydrate degradation; glycolysis; pyruvate from D-glyceraldehyde 3-phosphate: step 4/5.</text>
</comment>
<comment type="subcellular location">
    <subcellularLocation>
        <location evidence="1">Cytoplasm</location>
    </subcellularLocation>
    <subcellularLocation>
        <location evidence="1">Secreted</location>
    </subcellularLocation>
    <subcellularLocation>
        <location evidence="1">Cell surface</location>
    </subcellularLocation>
    <text evidence="1">Fractions of enolase are present in both the cytoplasm and on the cell surface.</text>
</comment>
<comment type="similarity">
    <text evidence="1">Belongs to the enolase family.</text>
</comment>
<name>ENO_GEODF</name>
<sequence>MSQITDVYAREILDSRGNPTLEVEVFLESGAMGRAAVPSGASTGEREALELRDGDKGRYLGKGVLKAVANVNDIIAEEVIGMEATDQVGIDRKMLELDGTEFKSKLGANAILGVSLAVAKAAADEVGLSLYQYIGGANAKELPLPMMNIINGGAHADNNVDIQEFMIMPAGAKNFAEALRMGAEIFHALKSVLKGKGYNTAVGDEGGFAPNLKSNEEALEVIIEAIQKAGFKPGEDVLLALDVASSELFSDGVYTLENEAQPKKTADQLIDFYENLVNKYPIISIEDGMAENDWEGWKKMTERLGKRIQIVGDDLFVTNPKILKEGIDKGIANSILIKLNQIGTLTETLDAIEMAKRAGYTTVISHRSGETEDTTLADLSVAVNAGQIKTGSLCRTDRVCKYNQLLRIEDELDAVALFRGKEVFYNLKKK</sequence>